<comment type="function">
    <text evidence="1">One of several proteins that assist in the late maturation steps of the functional core of the 30S ribosomal subunit. Helps release RbfA from mature subunits. May play a role in the assembly of ribosomal proteins into the subunit. Circularly permuted GTPase that catalyzes slow GTP hydrolysis, GTPase activity is stimulated by the 30S ribosomal subunit.</text>
</comment>
<comment type="cofactor">
    <cofactor evidence="1">
        <name>Zn(2+)</name>
        <dbReference type="ChEBI" id="CHEBI:29105"/>
    </cofactor>
    <text evidence="1">Binds 1 zinc ion per subunit.</text>
</comment>
<comment type="subunit">
    <text evidence="1">Monomer. Associates with 30S ribosomal subunit, binds 16S rRNA.</text>
</comment>
<comment type="subcellular location">
    <subcellularLocation>
        <location evidence="1">Cytoplasm</location>
    </subcellularLocation>
</comment>
<comment type="similarity">
    <text evidence="1">Belongs to the TRAFAC class YlqF/YawG GTPase family. RsgA subfamily.</text>
</comment>
<sequence length="350" mass="39089">MSKNKLSKGQQRRVQANHQRRLRTDRKPELDDSQLGDAQEGIVISRFGQHADVEAADGVQHRCNIRRTIKSLVTGDRVVWRPGLQAQEGVRVKGIVEAVHERTSVLTRPDLYDGVKPIAANIDQIVIVSAILPELSLNIIDRYLVACETLDVEPLIVLNKIDLLDADGRKFVDGMMDIYRRIGYNVLEVSSQTREGMEAFEQALAGRISIFAGQSGVGKSSLLNALLPPTDNEILVNTVSDNSGLGQHTTTAARLYHFQHGGDVIDSPGVREFGLWHLAPEQITQGFVEFRDYLGHCKFRDCSHTNDPGCALREAVEQGKIAEERFDNYHRILESMEQAKPRKTSDSDEK</sequence>
<gene>
    <name evidence="1" type="primary">rsgA</name>
    <name type="ordered locus">YE0368</name>
</gene>
<feature type="chain" id="PRO_1000188156" description="Small ribosomal subunit biogenesis GTPase RsgA">
    <location>
        <begin position="1"/>
        <end position="350"/>
    </location>
</feature>
<feature type="domain" description="CP-type G" evidence="2">
    <location>
        <begin position="103"/>
        <end position="273"/>
    </location>
</feature>
<feature type="region of interest" description="Disordered" evidence="3">
    <location>
        <begin position="1"/>
        <end position="35"/>
    </location>
</feature>
<feature type="compositionally biased region" description="Polar residues" evidence="3">
    <location>
        <begin position="1"/>
        <end position="17"/>
    </location>
</feature>
<feature type="binding site" evidence="1">
    <location>
        <begin position="159"/>
        <end position="162"/>
    </location>
    <ligand>
        <name>GTP</name>
        <dbReference type="ChEBI" id="CHEBI:37565"/>
    </ligand>
</feature>
<feature type="binding site" evidence="1">
    <location>
        <begin position="213"/>
        <end position="221"/>
    </location>
    <ligand>
        <name>GTP</name>
        <dbReference type="ChEBI" id="CHEBI:37565"/>
    </ligand>
</feature>
<feature type="binding site" evidence="1">
    <location>
        <position position="297"/>
    </location>
    <ligand>
        <name>Zn(2+)</name>
        <dbReference type="ChEBI" id="CHEBI:29105"/>
    </ligand>
</feature>
<feature type="binding site" evidence="1">
    <location>
        <position position="302"/>
    </location>
    <ligand>
        <name>Zn(2+)</name>
        <dbReference type="ChEBI" id="CHEBI:29105"/>
    </ligand>
</feature>
<feature type="binding site" evidence="1">
    <location>
        <position position="304"/>
    </location>
    <ligand>
        <name>Zn(2+)</name>
        <dbReference type="ChEBI" id="CHEBI:29105"/>
    </ligand>
</feature>
<feature type="binding site" evidence="1">
    <location>
        <position position="310"/>
    </location>
    <ligand>
        <name>Zn(2+)</name>
        <dbReference type="ChEBI" id="CHEBI:29105"/>
    </ligand>
</feature>
<dbReference type="EC" id="3.6.1.-" evidence="1"/>
<dbReference type="EMBL" id="AM286415">
    <property type="protein sequence ID" value="CAL10498.1"/>
    <property type="molecule type" value="Genomic_DNA"/>
</dbReference>
<dbReference type="RefSeq" id="WP_011815419.1">
    <property type="nucleotide sequence ID" value="NC_008800.1"/>
</dbReference>
<dbReference type="RefSeq" id="YP_001004744.1">
    <property type="nucleotide sequence ID" value="NC_008800.1"/>
</dbReference>
<dbReference type="SMR" id="A1JIQ7"/>
<dbReference type="GeneID" id="93968848"/>
<dbReference type="KEGG" id="yen:YE0368"/>
<dbReference type="PATRIC" id="fig|393305.7.peg.465"/>
<dbReference type="eggNOG" id="COG1162">
    <property type="taxonomic scope" value="Bacteria"/>
</dbReference>
<dbReference type="HOGENOM" id="CLU_033617_2_0_6"/>
<dbReference type="OrthoDB" id="9809485at2"/>
<dbReference type="Proteomes" id="UP000000642">
    <property type="component" value="Chromosome"/>
</dbReference>
<dbReference type="GO" id="GO:0005737">
    <property type="term" value="C:cytoplasm"/>
    <property type="evidence" value="ECO:0007669"/>
    <property type="project" value="UniProtKB-SubCell"/>
</dbReference>
<dbReference type="GO" id="GO:0005525">
    <property type="term" value="F:GTP binding"/>
    <property type="evidence" value="ECO:0007669"/>
    <property type="project" value="UniProtKB-UniRule"/>
</dbReference>
<dbReference type="GO" id="GO:0003924">
    <property type="term" value="F:GTPase activity"/>
    <property type="evidence" value="ECO:0007669"/>
    <property type="project" value="UniProtKB-UniRule"/>
</dbReference>
<dbReference type="GO" id="GO:0046872">
    <property type="term" value="F:metal ion binding"/>
    <property type="evidence" value="ECO:0007669"/>
    <property type="project" value="UniProtKB-KW"/>
</dbReference>
<dbReference type="GO" id="GO:0019843">
    <property type="term" value="F:rRNA binding"/>
    <property type="evidence" value="ECO:0007669"/>
    <property type="project" value="UniProtKB-KW"/>
</dbReference>
<dbReference type="GO" id="GO:0042274">
    <property type="term" value="P:ribosomal small subunit biogenesis"/>
    <property type="evidence" value="ECO:0007669"/>
    <property type="project" value="UniProtKB-UniRule"/>
</dbReference>
<dbReference type="CDD" id="cd01854">
    <property type="entry name" value="YjeQ_EngC"/>
    <property type="match status" value="1"/>
</dbReference>
<dbReference type="Gene3D" id="2.40.50.140">
    <property type="entry name" value="Nucleic acid-binding proteins"/>
    <property type="match status" value="1"/>
</dbReference>
<dbReference type="Gene3D" id="3.40.50.300">
    <property type="entry name" value="P-loop containing nucleotide triphosphate hydrolases"/>
    <property type="match status" value="1"/>
</dbReference>
<dbReference type="Gene3D" id="1.10.40.50">
    <property type="entry name" value="Probable gtpase engc, domain 3"/>
    <property type="match status" value="1"/>
</dbReference>
<dbReference type="HAMAP" id="MF_01820">
    <property type="entry name" value="GTPase_RsgA"/>
    <property type="match status" value="1"/>
</dbReference>
<dbReference type="InterPro" id="IPR030378">
    <property type="entry name" value="G_CP_dom"/>
</dbReference>
<dbReference type="InterPro" id="IPR012340">
    <property type="entry name" value="NA-bd_OB-fold"/>
</dbReference>
<dbReference type="InterPro" id="IPR027417">
    <property type="entry name" value="P-loop_NTPase"/>
</dbReference>
<dbReference type="InterPro" id="IPR004881">
    <property type="entry name" value="Ribosome_biogen_GTPase_RsgA"/>
</dbReference>
<dbReference type="InterPro" id="IPR010914">
    <property type="entry name" value="RsgA_GTPase_dom"/>
</dbReference>
<dbReference type="NCBIfam" id="NF008931">
    <property type="entry name" value="PRK12288.1"/>
    <property type="match status" value="1"/>
</dbReference>
<dbReference type="NCBIfam" id="TIGR00157">
    <property type="entry name" value="ribosome small subunit-dependent GTPase A"/>
    <property type="match status" value="1"/>
</dbReference>
<dbReference type="PANTHER" id="PTHR32120">
    <property type="entry name" value="SMALL RIBOSOMAL SUBUNIT BIOGENESIS GTPASE RSGA"/>
    <property type="match status" value="1"/>
</dbReference>
<dbReference type="PANTHER" id="PTHR32120:SF11">
    <property type="entry name" value="SMALL RIBOSOMAL SUBUNIT BIOGENESIS GTPASE RSGA 1, MITOCHONDRIAL-RELATED"/>
    <property type="match status" value="1"/>
</dbReference>
<dbReference type="Pfam" id="PF03193">
    <property type="entry name" value="RsgA_GTPase"/>
    <property type="match status" value="1"/>
</dbReference>
<dbReference type="SUPFAM" id="SSF52540">
    <property type="entry name" value="P-loop containing nucleoside triphosphate hydrolases"/>
    <property type="match status" value="1"/>
</dbReference>
<dbReference type="PROSITE" id="PS50936">
    <property type="entry name" value="ENGC_GTPASE"/>
    <property type="match status" value="1"/>
</dbReference>
<dbReference type="PROSITE" id="PS51721">
    <property type="entry name" value="G_CP"/>
    <property type="match status" value="1"/>
</dbReference>
<keyword id="KW-0963">Cytoplasm</keyword>
<keyword id="KW-0342">GTP-binding</keyword>
<keyword id="KW-0378">Hydrolase</keyword>
<keyword id="KW-0479">Metal-binding</keyword>
<keyword id="KW-0547">Nucleotide-binding</keyword>
<keyword id="KW-0690">Ribosome biogenesis</keyword>
<keyword id="KW-0694">RNA-binding</keyword>
<keyword id="KW-0699">rRNA-binding</keyword>
<keyword id="KW-0862">Zinc</keyword>
<proteinExistence type="inferred from homology"/>
<protein>
    <recommendedName>
        <fullName evidence="1">Small ribosomal subunit biogenesis GTPase RsgA</fullName>
        <ecNumber evidence="1">3.6.1.-</ecNumber>
    </recommendedName>
</protein>
<organism>
    <name type="scientific">Yersinia enterocolitica serotype O:8 / biotype 1B (strain NCTC 13174 / 8081)</name>
    <dbReference type="NCBI Taxonomy" id="393305"/>
    <lineage>
        <taxon>Bacteria</taxon>
        <taxon>Pseudomonadati</taxon>
        <taxon>Pseudomonadota</taxon>
        <taxon>Gammaproteobacteria</taxon>
        <taxon>Enterobacterales</taxon>
        <taxon>Yersiniaceae</taxon>
        <taxon>Yersinia</taxon>
    </lineage>
</organism>
<reference key="1">
    <citation type="journal article" date="2006" name="PLoS Genet.">
        <title>The complete genome sequence and comparative genome analysis of the high pathogenicity Yersinia enterocolitica strain 8081.</title>
        <authorList>
            <person name="Thomson N.R."/>
            <person name="Howard S."/>
            <person name="Wren B.W."/>
            <person name="Holden M.T.G."/>
            <person name="Crossman L."/>
            <person name="Challis G.L."/>
            <person name="Churcher C."/>
            <person name="Mungall K."/>
            <person name="Brooks K."/>
            <person name="Chillingworth T."/>
            <person name="Feltwell T."/>
            <person name="Abdellah Z."/>
            <person name="Hauser H."/>
            <person name="Jagels K."/>
            <person name="Maddison M."/>
            <person name="Moule S."/>
            <person name="Sanders M."/>
            <person name="Whitehead S."/>
            <person name="Quail M.A."/>
            <person name="Dougan G."/>
            <person name="Parkhill J."/>
            <person name="Prentice M.B."/>
        </authorList>
    </citation>
    <scope>NUCLEOTIDE SEQUENCE [LARGE SCALE GENOMIC DNA]</scope>
    <source>
        <strain>NCTC 13174 / 8081</strain>
    </source>
</reference>
<name>RSGA_YERE8</name>
<accession>A1JIQ7</accession>
<evidence type="ECO:0000255" key="1">
    <source>
        <dbReference type="HAMAP-Rule" id="MF_01820"/>
    </source>
</evidence>
<evidence type="ECO:0000255" key="2">
    <source>
        <dbReference type="PROSITE-ProRule" id="PRU01058"/>
    </source>
</evidence>
<evidence type="ECO:0000256" key="3">
    <source>
        <dbReference type="SAM" id="MobiDB-lite"/>
    </source>
</evidence>